<keyword id="KW-0027">Amidation</keyword>
<keyword id="KW-0903">Direct protein sequencing</keyword>
<keyword id="KW-0527">Neuropeptide</keyword>
<keyword id="KW-0964">Secreted</keyword>
<protein>
    <recommendedName>
        <fullName evidence="4">Extended FMRFamide-5</fullName>
        <shortName evidence="4">FMRFa-5</shortName>
    </recommendedName>
</protein>
<evidence type="ECO:0000250" key="1">
    <source>
        <dbReference type="UniProtKB" id="P34405"/>
    </source>
</evidence>
<evidence type="ECO:0000255" key="2"/>
<evidence type="ECO:0000269" key="3">
    <source>
    </source>
</evidence>
<evidence type="ECO:0000303" key="4">
    <source>
    </source>
</evidence>
<evidence type="ECO:0000305" key="5"/>
<evidence type="ECO:0000305" key="6">
    <source>
    </source>
</evidence>
<feature type="peptide" id="PRO_0000421516" description="Extended FMRFamide-5" evidence="3">
    <location>
        <begin position="1"/>
        <end position="8"/>
    </location>
</feature>
<feature type="modified residue" description="Leucine amide" evidence="3">
    <location>
        <position position="8"/>
    </location>
</feature>
<feature type="unsure residue" description="L or I" evidence="3">
    <location>
        <position position="6"/>
    </location>
</feature>
<feature type="unsure residue" description="L or I" evidence="3">
    <location>
        <position position="8"/>
    </location>
</feature>
<organism>
    <name type="scientific">Lobatophasma redelinghuysense</name>
    <name type="common">Gladiator</name>
    <name type="synonym">Heel-walker</name>
    <dbReference type="NCBI Taxonomy" id="253128"/>
    <lineage>
        <taxon>Eukaryota</taxon>
        <taxon>Metazoa</taxon>
        <taxon>Ecdysozoa</taxon>
        <taxon>Arthropoda</taxon>
        <taxon>Hexapoda</taxon>
        <taxon>Insecta</taxon>
        <taxon>Pterygota</taxon>
        <taxon>Neoptera</taxon>
        <taxon>Polyneoptera</taxon>
        <taxon>Mantophasmatodea</taxon>
        <taxon>Austrophasmatidae</taxon>
        <taxon>Lobatophasma</taxon>
    </lineage>
</organism>
<proteinExistence type="evidence at protein level"/>
<sequence length="8" mass="1034">TDRNFLRL</sequence>
<reference evidence="5" key="1">
    <citation type="journal article" date="2012" name="Syst. Biol.">
        <title>Peptidomics-based phylogeny and biogeography of Mantophasmatodea (Hexapoda).</title>
        <authorList>
            <person name="Predel R."/>
            <person name="Neupert S."/>
            <person name="Huetteroth W."/>
            <person name="Kahnt J."/>
            <person name="Waidelich D."/>
            <person name="Roth S."/>
        </authorList>
    </citation>
    <scope>PROTEIN SEQUENCE</scope>
    <scope>AMIDATION AT LEU-8</scope>
    <source>
        <tissue evidence="3">Thoracic perisympathetic organs</tissue>
    </source>
</reference>
<name>FAR5_LOBRE</name>
<dbReference type="GO" id="GO:0005576">
    <property type="term" value="C:extracellular region"/>
    <property type="evidence" value="ECO:0007669"/>
    <property type="project" value="UniProtKB-SubCell"/>
</dbReference>
<dbReference type="GO" id="GO:0007218">
    <property type="term" value="P:neuropeptide signaling pathway"/>
    <property type="evidence" value="ECO:0007669"/>
    <property type="project" value="UniProtKB-KW"/>
</dbReference>
<accession>B3A085</accession>
<comment type="function">
    <text evidence="1">FMRFamides and FMRFamide-like peptides are neuropeptides.</text>
</comment>
<comment type="subcellular location">
    <subcellularLocation>
        <location evidence="6">Secreted</location>
    </subcellularLocation>
</comment>
<comment type="similarity">
    <text evidence="2">Belongs to the FARP (FMRF amide related peptide) family.</text>
</comment>